<dbReference type="EMBL" id="AF095721">
    <property type="protein sequence ID" value="AAC64197.1"/>
    <property type="molecule type" value="mRNA"/>
</dbReference>
<dbReference type="SMR" id="O93590"/>
<dbReference type="GeneID" id="373704"/>
<dbReference type="KEGG" id="xla:373704"/>
<dbReference type="AGR" id="Xenbase:XB-GENE-865322"/>
<dbReference type="CTD" id="373704"/>
<dbReference type="Xenbase" id="XB-GENE-865322">
    <property type="gene designation" value="nkx3-3.S"/>
</dbReference>
<dbReference type="OMA" id="SKCEERN"/>
<dbReference type="OrthoDB" id="6159439at2759"/>
<dbReference type="Proteomes" id="UP000186698">
    <property type="component" value="Chromosome 7S"/>
</dbReference>
<dbReference type="Bgee" id="373704">
    <property type="expression patterns" value="Expressed in testis and 2 other cell types or tissues"/>
</dbReference>
<dbReference type="GO" id="GO:0005634">
    <property type="term" value="C:nucleus"/>
    <property type="evidence" value="ECO:0000318"/>
    <property type="project" value="GO_Central"/>
</dbReference>
<dbReference type="GO" id="GO:0003677">
    <property type="term" value="F:DNA binding"/>
    <property type="evidence" value="ECO:0000250"/>
    <property type="project" value="UniProtKB"/>
</dbReference>
<dbReference type="GO" id="GO:0000981">
    <property type="term" value="F:DNA-binding transcription factor activity, RNA polymerase II-specific"/>
    <property type="evidence" value="ECO:0000318"/>
    <property type="project" value="GO_Central"/>
</dbReference>
<dbReference type="GO" id="GO:0000978">
    <property type="term" value="F:RNA polymerase II cis-regulatory region sequence-specific DNA binding"/>
    <property type="evidence" value="ECO:0000318"/>
    <property type="project" value="GO_Central"/>
</dbReference>
<dbReference type="GO" id="GO:0030154">
    <property type="term" value="P:cell differentiation"/>
    <property type="evidence" value="ECO:0000318"/>
    <property type="project" value="GO_Central"/>
</dbReference>
<dbReference type="GO" id="GO:0045944">
    <property type="term" value="P:positive regulation of transcription by RNA polymerase II"/>
    <property type="evidence" value="ECO:0000250"/>
    <property type="project" value="UniProtKB"/>
</dbReference>
<dbReference type="GO" id="GO:0006357">
    <property type="term" value="P:regulation of transcription by RNA polymerase II"/>
    <property type="evidence" value="ECO:0000318"/>
    <property type="project" value="GO_Central"/>
</dbReference>
<dbReference type="CDD" id="cd00086">
    <property type="entry name" value="homeodomain"/>
    <property type="match status" value="1"/>
</dbReference>
<dbReference type="FunFam" id="1.10.10.60:FF:000815">
    <property type="entry name" value="NK3 homeobox 3"/>
    <property type="match status" value="1"/>
</dbReference>
<dbReference type="Gene3D" id="1.10.10.60">
    <property type="entry name" value="Homeodomain-like"/>
    <property type="match status" value="1"/>
</dbReference>
<dbReference type="InterPro" id="IPR001356">
    <property type="entry name" value="HD"/>
</dbReference>
<dbReference type="InterPro" id="IPR020479">
    <property type="entry name" value="HD_metazoa"/>
</dbReference>
<dbReference type="InterPro" id="IPR017970">
    <property type="entry name" value="Homeobox_CS"/>
</dbReference>
<dbReference type="InterPro" id="IPR050394">
    <property type="entry name" value="Homeobox_NK-like"/>
</dbReference>
<dbReference type="InterPro" id="IPR009057">
    <property type="entry name" value="Homeodomain-like_sf"/>
</dbReference>
<dbReference type="PANTHER" id="PTHR24340">
    <property type="entry name" value="HOMEOBOX PROTEIN NKX"/>
    <property type="match status" value="1"/>
</dbReference>
<dbReference type="PANTHER" id="PTHR24340:SF119">
    <property type="entry name" value="HOMEOBOX PROTEIN ZAMPOGNA"/>
    <property type="match status" value="1"/>
</dbReference>
<dbReference type="Pfam" id="PF00046">
    <property type="entry name" value="Homeodomain"/>
    <property type="match status" value="1"/>
</dbReference>
<dbReference type="PRINTS" id="PR00024">
    <property type="entry name" value="HOMEOBOX"/>
</dbReference>
<dbReference type="SMART" id="SM00389">
    <property type="entry name" value="HOX"/>
    <property type="match status" value="1"/>
</dbReference>
<dbReference type="SUPFAM" id="SSF46689">
    <property type="entry name" value="Homeodomain-like"/>
    <property type="match status" value="1"/>
</dbReference>
<dbReference type="PROSITE" id="PS00027">
    <property type="entry name" value="HOMEOBOX_1"/>
    <property type="match status" value="1"/>
</dbReference>
<dbReference type="PROSITE" id="PS50071">
    <property type="entry name" value="HOMEOBOX_2"/>
    <property type="match status" value="1"/>
</dbReference>
<reference evidence="6 7" key="1">
    <citation type="journal article" date="1999" name="Dev. Genes Evol.">
        <title>The Xenopus bagpipe-related homeobox gene zampogna is expressed in the pharyngeal endoderm and the visceral musculature of the midgut.</title>
        <authorList>
            <person name="Newman C.S."/>
            <person name="Krieg P.A."/>
        </authorList>
    </citation>
    <scope>NUCLEOTIDE SEQUENCE [MRNA]</scope>
    <scope>TISSUE SPECIFICITY</scope>
    <scope>DEVELOPMENTAL STAGE</scope>
    <source>
        <tissue evidence="4">Tadpole</tissue>
    </source>
</reference>
<accession>O93590</accession>
<feature type="chain" id="PRO_0000271784" description="Homeobox protein zampogna">
    <location>
        <begin position="1"/>
        <end position="224"/>
    </location>
</feature>
<feature type="DNA-binding region" description="Homeobox" evidence="2">
    <location>
        <begin position="100"/>
        <end position="159"/>
    </location>
</feature>
<feature type="region of interest" description="Disordered" evidence="3">
    <location>
        <begin position="1"/>
        <end position="107"/>
    </location>
</feature>
<feature type="compositionally biased region" description="Basic and acidic residues" evidence="3">
    <location>
        <begin position="55"/>
        <end position="76"/>
    </location>
</feature>
<feature type="compositionally biased region" description="Polar residues" evidence="3">
    <location>
        <begin position="77"/>
        <end position="87"/>
    </location>
</feature>
<sequence length="224" mass="25463">MSLTSFSIQDILARTGGNRGKDTRTDGNNISPPPSPSADEGHNEWPRAENPPLTPEKEKTDTDSGTEDFHWERDTETANNGAFTDPSSGDRLADSPKSSKKRSRAAFSHAQVYELERRFSLQRYLSGPERADLAASLKLTETQVKIWFQNRRYKTKRKLIATQTAPKSSLVPTRKVAVRVLVKDDQRQYCPEDMLSPSLLSLYHAYQYYPYMYCLPAWVPHLPL</sequence>
<protein>
    <recommendedName>
        <fullName>Homeobox protein zampogna</fullName>
    </recommendedName>
    <alternativeName>
        <fullName>Xzax</fullName>
    </alternativeName>
</protein>
<organism>
    <name type="scientific">Xenopus laevis</name>
    <name type="common">African clawed frog</name>
    <dbReference type="NCBI Taxonomy" id="8355"/>
    <lineage>
        <taxon>Eukaryota</taxon>
        <taxon>Metazoa</taxon>
        <taxon>Chordata</taxon>
        <taxon>Craniata</taxon>
        <taxon>Vertebrata</taxon>
        <taxon>Euteleostomi</taxon>
        <taxon>Amphibia</taxon>
        <taxon>Batrachia</taxon>
        <taxon>Anura</taxon>
        <taxon>Pipoidea</taxon>
        <taxon>Pipidae</taxon>
        <taxon>Xenopodinae</taxon>
        <taxon>Xenopus</taxon>
        <taxon>Xenopus</taxon>
    </lineage>
</organism>
<keyword id="KW-0217">Developmental protein</keyword>
<keyword id="KW-0238">DNA-binding</keyword>
<keyword id="KW-0371">Homeobox</keyword>
<keyword id="KW-0539">Nucleus</keyword>
<keyword id="KW-1185">Reference proteome</keyword>
<comment type="subcellular location">
    <subcellularLocation>
        <location evidence="6">Nucleus</location>
    </subcellularLocation>
</comment>
<comment type="tissue specificity">
    <text evidence="4">At early tailbud stage, expressed in the pharyngeal endoderm, concentrated within the pharyngeal clefts. Also expressed in the mesenchymal head cells in the future infrarostral cartilage. Beginning at the mid-tailbud stage, expressed in the muscular layer of the midgut.</text>
</comment>
<comment type="developmental stage">
    <text evidence="4">Expressed at a low level throughout all developmental stages. Expression levels significantly increase after the mid-tailbud stage and are maintained through the tadpole stage (stage 40).</text>
</comment>
<comment type="miscellaneous">
    <text evidence="4">Based on similarity to Drosophila 'bagpipe/bap', the name 'zampogna' was chosen after an Italian musical instrument related to the Scottish bagpipe.</text>
</comment>
<comment type="similarity">
    <text evidence="1">Belongs to the NK-3 homeobox family.</text>
</comment>
<gene>
    <name evidence="5" type="primary">zax</name>
</gene>
<evidence type="ECO:0000255" key="1"/>
<evidence type="ECO:0000255" key="2">
    <source>
        <dbReference type="PROSITE-ProRule" id="PRU00108"/>
    </source>
</evidence>
<evidence type="ECO:0000256" key="3">
    <source>
        <dbReference type="SAM" id="MobiDB-lite"/>
    </source>
</evidence>
<evidence type="ECO:0000269" key="4">
    <source>
    </source>
</evidence>
<evidence type="ECO:0000303" key="5">
    <source>
    </source>
</evidence>
<evidence type="ECO:0000305" key="6"/>
<evidence type="ECO:0000312" key="7">
    <source>
        <dbReference type="EMBL" id="AAC64197.1"/>
    </source>
</evidence>
<proteinExistence type="evidence at transcript level"/>
<name>ZAX_XENLA</name>